<organism>
    <name type="scientific">Staphylococcus aureus (strain JH9)</name>
    <dbReference type="NCBI Taxonomy" id="359786"/>
    <lineage>
        <taxon>Bacteria</taxon>
        <taxon>Bacillati</taxon>
        <taxon>Bacillota</taxon>
        <taxon>Bacilli</taxon>
        <taxon>Bacillales</taxon>
        <taxon>Staphylococcaceae</taxon>
        <taxon>Staphylococcus</taxon>
    </lineage>
</organism>
<evidence type="ECO:0000255" key="1">
    <source>
        <dbReference type="HAMAP-Rule" id="MF_00508"/>
    </source>
</evidence>
<evidence type="ECO:0000305" key="2"/>
<keyword id="KW-0002">3D-structure</keyword>
<keyword id="KW-0687">Ribonucleoprotein</keyword>
<keyword id="KW-0689">Ribosomal protein</keyword>
<accession>A5IV35</accession>
<name>RS10_STAA9</name>
<protein>
    <recommendedName>
        <fullName evidence="1">Small ribosomal subunit protein uS10</fullName>
    </recommendedName>
    <alternativeName>
        <fullName evidence="2">30S ribosomal protein S10</fullName>
    </alternativeName>
</protein>
<dbReference type="EMBL" id="CP000703">
    <property type="protein sequence ID" value="ABQ50058.1"/>
    <property type="molecule type" value="Genomic_DNA"/>
</dbReference>
<dbReference type="RefSeq" id="WP_001118667.1">
    <property type="nucleotide sequence ID" value="NC_009487.1"/>
</dbReference>
<dbReference type="PDB" id="8P2G">
    <property type="method" value="EM"/>
    <property type="resolution" value="2.02 A"/>
    <property type="chains" value="k=1-102"/>
</dbReference>
<dbReference type="PDB" id="8P2H">
    <property type="method" value="EM"/>
    <property type="resolution" value="2.49 A"/>
    <property type="chains" value="k=1-102"/>
</dbReference>
<dbReference type="PDBsum" id="8P2G"/>
<dbReference type="PDBsum" id="8P2H"/>
<dbReference type="EMDB" id="EMD-17364"/>
<dbReference type="EMDB" id="EMD-17365"/>
<dbReference type="SMR" id="A5IV35"/>
<dbReference type="GeneID" id="98346563"/>
<dbReference type="KEGG" id="saj:SaurJH9_2278"/>
<dbReference type="HOGENOM" id="CLU_122625_1_3_9"/>
<dbReference type="GO" id="GO:1990904">
    <property type="term" value="C:ribonucleoprotein complex"/>
    <property type="evidence" value="ECO:0007669"/>
    <property type="project" value="UniProtKB-KW"/>
</dbReference>
<dbReference type="GO" id="GO:0005840">
    <property type="term" value="C:ribosome"/>
    <property type="evidence" value="ECO:0007669"/>
    <property type="project" value="UniProtKB-KW"/>
</dbReference>
<dbReference type="GO" id="GO:0003735">
    <property type="term" value="F:structural constituent of ribosome"/>
    <property type="evidence" value="ECO:0007669"/>
    <property type="project" value="InterPro"/>
</dbReference>
<dbReference type="GO" id="GO:0000049">
    <property type="term" value="F:tRNA binding"/>
    <property type="evidence" value="ECO:0007669"/>
    <property type="project" value="UniProtKB-UniRule"/>
</dbReference>
<dbReference type="GO" id="GO:0006412">
    <property type="term" value="P:translation"/>
    <property type="evidence" value="ECO:0007669"/>
    <property type="project" value="UniProtKB-UniRule"/>
</dbReference>
<dbReference type="FunFam" id="3.30.70.600:FF:000001">
    <property type="entry name" value="30S ribosomal protein S10"/>
    <property type="match status" value="1"/>
</dbReference>
<dbReference type="Gene3D" id="3.30.70.600">
    <property type="entry name" value="Ribosomal protein S10 domain"/>
    <property type="match status" value="1"/>
</dbReference>
<dbReference type="HAMAP" id="MF_00508">
    <property type="entry name" value="Ribosomal_uS10"/>
    <property type="match status" value="1"/>
</dbReference>
<dbReference type="InterPro" id="IPR001848">
    <property type="entry name" value="Ribosomal_uS10"/>
</dbReference>
<dbReference type="InterPro" id="IPR018268">
    <property type="entry name" value="Ribosomal_uS10_CS"/>
</dbReference>
<dbReference type="InterPro" id="IPR027486">
    <property type="entry name" value="Ribosomal_uS10_dom"/>
</dbReference>
<dbReference type="InterPro" id="IPR036838">
    <property type="entry name" value="Ribosomal_uS10_dom_sf"/>
</dbReference>
<dbReference type="NCBIfam" id="NF001861">
    <property type="entry name" value="PRK00596.1"/>
    <property type="match status" value="1"/>
</dbReference>
<dbReference type="NCBIfam" id="TIGR01049">
    <property type="entry name" value="rpsJ_bact"/>
    <property type="match status" value="1"/>
</dbReference>
<dbReference type="PANTHER" id="PTHR11700">
    <property type="entry name" value="30S RIBOSOMAL PROTEIN S10 FAMILY MEMBER"/>
    <property type="match status" value="1"/>
</dbReference>
<dbReference type="Pfam" id="PF00338">
    <property type="entry name" value="Ribosomal_S10"/>
    <property type="match status" value="1"/>
</dbReference>
<dbReference type="PRINTS" id="PR00971">
    <property type="entry name" value="RIBOSOMALS10"/>
</dbReference>
<dbReference type="SMART" id="SM01403">
    <property type="entry name" value="Ribosomal_S10"/>
    <property type="match status" value="1"/>
</dbReference>
<dbReference type="SUPFAM" id="SSF54999">
    <property type="entry name" value="Ribosomal protein S10"/>
    <property type="match status" value="1"/>
</dbReference>
<dbReference type="PROSITE" id="PS00361">
    <property type="entry name" value="RIBOSOMAL_S10"/>
    <property type="match status" value="1"/>
</dbReference>
<proteinExistence type="evidence at protein level"/>
<reference key="1">
    <citation type="submission" date="2007-05" db="EMBL/GenBank/DDBJ databases">
        <title>Complete sequence of chromosome of Staphylococcus aureus subsp. aureus JH9.</title>
        <authorList>
            <consortium name="US DOE Joint Genome Institute"/>
            <person name="Copeland A."/>
            <person name="Lucas S."/>
            <person name="Lapidus A."/>
            <person name="Barry K."/>
            <person name="Detter J.C."/>
            <person name="Glavina del Rio T."/>
            <person name="Hammon N."/>
            <person name="Israni S."/>
            <person name="Pitluck S."/>
            <person name="Chain P."/>
            <person name="Malfatti S."/>
            <person name="Shin M."/>
            <person name="Vergez L."/>
            <person name="Schmutz J."/>
            <person name="Larimer F."/>
            <person name="Land M."/>
            <person name="Hauser L."/>
            <person name="Kyrpides N."/>
            <person name="Kim E."/>
            <person name="Tomasz A."/>
            <person name="Richardson P."/>
        </authorList>
    </citation>
    <scope>NUCLEOTIDE SEQUENCE [LARGE SCALE GENOMIC DNA]</scope>
    <source>
        <strain>JH9</strain>
    </source>
</reference>
<sequence length="102" mass="11576">MAKQKIRIRLKAYDHRVIDQSAEKIVETAKRSGADVSGPIPLPTEKSVYTIIRAVHKYKDSREQFEQRTHKRLIDIVNPTPKTVDALMGLNLPSGVDIEIKL</sequence>
<feature type="chain" id="PRO_1000081573" description="Small ribosomal subunit protein uS10">
    <location>
        <begin position="1"/>
        <end position="102"/>
    </location>
</feature>
<gene>
    <name evidence="1" type="primary">rpsJ</name>
    <name type="ordered locus">SaurJH9_2278</name>
</gene>
<comment type="function">
    <text evidence="1">Involved in the binding of tRNA to the ribosomes.</text>
</comment>
<comment type="subunit">
    <text evidence="1">Part of the 30S ribosomal subunit.</text>
</comment>
<comment type="similarity">
    <text evidence="1">Belongs to the universal ribosomal protein uS10 family.</text>
</comment>